<gene>
    <name evidence="1" type="primary">gpmB</name>
    <name type="ordered locus">BWG_4087</name>
</gene>
<reference key="1">
    <citation type="journal article" date="2009" name="J. Bacteriol.">
        <title>Genomic sequencing reveals regulatory mutations and recombinational events in the widely used MC4100 lineage of Escherichia coli K-12.</title>
        <authorList>
            <person name="Ferenci T."/>
            <person name="Zhou Z."/>
            <person name="Betteridge T."/>
            <person name="Ren Y."/>
            <person name="Liu Y."/>
            <person name="Feng L."/>
            <person name="Reeves P.R."/>
            <person name="Wang L."/>
        </authorList>
    </citation>
    <scope>NUCLEOTIDE SEQUENCE [LARGE SCALE GENOMIC DNA]</scope>
    <source>
        <strain>K12 / MC4100 / BW2952</strain>
    </source>
</reference>
<name>GPMB_ECOBW</name>
<feature type="chain" id="PRO_1000213397" description="Probable phosphoglycerate mutase GpmB">
    <location>
        <begin position="1"/>
        <end position="215"/>
    </location>
</feature>
<feature type="active site" description="Tele-phosphohistidine intermediate" evidence="1">
    <location>
        <position position="9"/>
    </location>
</feature>
<feature type="active site" description="Proton donor/acceptor" evidence="1">
    <location>
        <position position="82"/>
    </location>
</feature>
<feature type="binding site" evidence="1">
    <location>
        <begin position="8"/>
        <end position="15"/>
    </location>
    <ligand>
        <name>substrate</name>
    </ligand>
</feature>
<feature type="binding site" evidence="1">
    <location>
        <begin position="21"/>
        <end position="22"/>
    </location>
    <ligand>
        <name>substrate</name>
    </ligand>
</feature>
<feature type="binding site" evidence="1">
    <location>
        <position position="58"/>
    </location>
    <ligand>
        <name>substrate</name>
    </ligand>
</feature>
<feature type="binding site" evidence="1">
    <location>
        <position position="60"/>
    </location>
    <ligand>
        <name>substrate</name>
    </ligand>
</feature>
<feature type="binding site" evidence="1">
    <location>
        <begin position="82"/>
        <end position="85"/>
    </location>
    <ligand>
        <name>substrate</name>
    </ligand>
</feature>
<feature type="binding site" evidence="1">
    <location>
        <begin position="104"/>
        <end position="105"/>
    </location>
    <ligand>
        <name>substrate</name>
    </ligand>
</feature>
<feature type="binding site" evidence="1">
    <location>
        <begin position="151"/>
        <end position="152"/>
    </location>
    <ligand>
        <name>substrate</name>
    </ligand>
</feature>
<feature type="site" description="Transition state stabilizer" evidence="1">
    <location>
        <position position="150"/>
    </location>
</feature>
<proteinExistence type="inferred from homology"/>
<accession>C4ZT77</accession>
<dbReference type="EC" id="5.4.2.-" evidence="1"/>
<dbReference type="EMBL" id="CP001396">
    <property type="protein sequence ID" value="ACR64045.1"/>
    <property type="molecule type" value="Genomic_DNA"/>
</dbReference>
<dbReference type="RefSeq" id="WP_000942344.1">
    <property type="nucleotide sequence ID" value="NC_012759.1"/>
</dbReference>
<dbReference type="SMR" id="C4ZT77"/>
<dbReference type="GeneID" id="93777450"/>
<dbReference type="KEGG" id="ebw:BWG_4087"/>
<dbReference type="HOGENOM" id="CLU_033323_9_5_6"/>
<dbReference type="UniPathway" id="UPA00109">
    <property type="reaction ID" value="UER00186"/>
</dbReference>
<dbReference type="GO" id="GO:0005737">
    <property type="term" value="C:cytoplasm"/>
    <property type="evidence" value="ECO:0007669"/>
    <property type="project" value="TreeGrafter"/>
</dbReference>
<dbReference type="GO" id="GO:0016791">
    <property type="term" value="F:phosphatase activity"/>
    <property type="evidence" value="ECO:0007669"/>
    <property type="project" value="TreeGrafter"/>
</dbReference>
<dbReference type="GO" id="GO:0004619">
    <property type="term" value="F:phosphoglycerate mutase activity"/>
    <property type="evidence" value="ECO:0007669"/>
    <property type="project" value="UniProtKB-UniRule"/>
</dbReference>
<dbReference type="GO" id="GO:0006096">
    <property type="term" value="P:glycolytic process"/>
    <property type="evidence" value="ECO:0007669"/>
    <property type="project" value="UniProtKB-UniRule"/>
</dbReference>
<dbReference type="CDD" id="cd07067">
    <property type="entry name" value="HP_PGM_like"/>
    <property type="match status" value="1"/>
</dbReference>
<dbReference type="Gene3D" id="3.40.50.1240">
    <property type="entry name" value="Phosphoglycerate mutase-like"/>
    <property type="match status" value="1"/>
</dbReference>
<dbReference type="HAMAP" id="MF_01040">
    <property type="entry name" value="PGAM_GpmB"/>
    <property type="match status" value="1"/>
</dbReference>
<dbReference type="InterPro" id="IPR013078">
    <property type="entry name" value="His_Pase_superF_clade-1"/>
</dbReference>
<dbReference type="InterPro" id="IPR029033">
    <property type="entry name" value="His_PPase_superfam"/>
</dbReference>
<dbReference type="InterPro" id="IPR001345">
    <property type="entry name" value="PG/BPGM_mutase_AS"/>
</dbReference>
<dbReference type="InterPro" id="IPR050275">
    <property type="entry name" value="PGM_Phosphatase"/>
</dbReference>
<dbReference type="InterPro" id="IPR023086">
    <property type="entry name" value="Phosphoglycerate_mutase_GpmB"/>
</dbReference>
<dbReference type="NCBIfam" id="NF002901">
    <property type="entry name" value="PRK03482.1"/>
    <property type="match status" value="1"/>
</dbReference>
<dbReference type="PANTHER" id="PTHR48100">
    <property type="entry name" value="BROAD-SPECIFICITY PHOSPHATASE YOR283W-RELATED"/>
    <property type="match status" value="1"/>
</dbReference>
<dbReference type="PANTHER" id="PTHR48100:SF1">
    <property type="entry name" value="HISTIDINE PHOSPHATASE FAMILY PROTEIN-RELATED"/>
    <property type="match status" value="1"/>
</dbReference>
<dbReference type="Pfam" id="PF00300">
    <property type="entry name" value="His_Phos_1"/>
    <property type="match status" value="1"/>
</dbReference>
<dbReference type="SMART" id="SM00855">
    <property type="entry name" value="PGAM"/>
    <property type="match status" value="1"/>
</dbReference>
<dbReference type="SUPFAM" id="SSF53254">
    <property type="entry name" value="Phosphoglycerate mutase-like"/>
    <property type="match status" value="1"/>
</dbReference>
<dbReference type="PROSITE" id="PS00175">
    <property type="entry name" value="PG_MUTASE"/>
    <property type="match status" value="1"/>
</dbReference>
<sequence length="215" mass="24065">MLQVYLVRHGETQWNAERRIQGQSDSPLTAKGEQQAMQVATRAKELGITHIISSDLGRTRRTAEIIAQACGCDIIFDSRLRELNMGVLEKRHIDSLTEEEENWRRQLVNGTVDGRIPEGESMQELSDRVNAALESCRDLPQGSRPLLVSHGIALGCLVSTILGLPAWAERRLRLRNCSISRVDYQESLWLASGWVVETAGDISHLDAPALDELQR</sequence>
<protein>
    <recommendedName>
        <fullName evidence="1">Probable phosphoglycerate mutase GpmB</fullName>
        <ecNumber evidence="1">5.4.2.-</ecNumber>
    </recommendedName>
    <alternativeName>
        <fullName evidence="1">PGAM</fullName>
    </alternativeName>
    <alternativeName>
        <fullName evidence="1">Phosphoglyceromutase</fullName>
    </alternativeName>
</protein>
<comment type="catalytic activity">
    <reaction evidence="1">
        <text>(2R)-2-phosphoglycerate = (2R)-3-phosphoglycerate</text>
        <dbReference type="Rhea" id="RHEA:15901"/>
        <dbReference type="ChEBI" id="CHEBI:58272"/>
        <dbReference type="ChEBI" id="CHEBI:58289"/>
    </reaction>
</comment>
<comment type="pathway">
    <text evidence="1">Carbohydrate degradation; glycolysis; pyruvate from D-glyceraldehyde 3-phosphate: step 3/5.</text>
</comment>
<comment type="similarity">
    <text evidence="1">Belongs to the phosphoglycerate mutase family. GpmB subfamily.</text>
</comment>
<keyword id="KW-0324">Glycolysis</keyword>
<keyword id="KW-0413">Isomerase</keyword>
<evidence type="ECO:0000255" key="1">
    <source>
        <dbReference type="HAMAP-Rule" id="MF_01040"/>
    </source>
</evidence>
<organism>
    <name type="scientific">Escherichia coli (strain K12 / MC4100 / BW2952)</name>
    <dbReference type="NCBI Taxonomy" id="595496"/>
    <lineage>
        <taxon>Bacteria</taxon>
        <taxon>Pseudomonadati</taxon>
        <taxon>Pseudomonadota</taxon>
        <taxon>Gammaproteobacteria</taxon>
        <taxon>Enterobacterales</taxon>
        <taxon>Enterobacteriaceae</taxon>
        <taxon>Escherichia</taxon>
    </lineage>
</organism>